<protein>
    <recommendedName>
        <fullName>Trypsin, alkaline B</fullName>
        <ecNumber>3.4.21.4</ecNumber>
    </recommendedName>
</protein>
<feature type="signal peptide" evidence="2">
    <location>
        <begin position="1"/>
        <end position="17"/>
    </location>
</feature>
<feature type="propeptide" id="PRO_0000028293" description="Activation peptide">
    <location>
        <begin position="18"/>
        <end position="24"/>
    </location>
</feature>
<feature type="chain" id="PRO_0000028294" description="Trypsin, alkaline B">
    <location>
        <begin position="25"/>
        <end position="256"/>
    </location>
</feature>
<feature type="domain" description="Peptidase S1" evidence="3">
    <location>
        <begin position="25"/>
        <end position="256"/>
    </location>
</feature>
<feature type="active site" description="Charge relay system" evidence="1">
    <location>
        <position position="70"/>
    </location>
</feature>
<feature type="active site" description="Charge relay system" evidence="1">
    <location>
        <position position="115"/>
    </location>
</feature>
<feature type="active site" description="Charge relay system" evidence="1">
    <location>
        <position position="213"/>
    </location>
</feature>
<feature type="site" description="Required for specificity" evidence="1">
    <location>
        <position position="207"/>
    </location>
</feature>
<feature type="disulfide bond" evidence="3">
    <location>
        <begin position="55"/>
        <end position="71"/>
    </location>
</feature>
<feature type="disulfide bond" evidence="3">
    <location>
        <begin position="180"/>
        <end position="197"/>
    </location>
</feature>
<feature type="disulfide bond" evidence="3">
    <location>
        <begin position="209"/>
        <end position="233"/>
    </location>
</feature>
<dbReference type="EC" id="3.4.21.4"/>
<dbReference type="EMBL" id="L16806">
    <property type="protein sequence ID" value="AAA29340.1"/>
    <property type="molecule type" value="mRNA"/>
</dbReference>
<dbReference type="SMR" id="P35046"/>
<dbReference type="MEROPS" id="S01.420"/>
<dbReference type="OrthoDB" id="9425590at2759"/>
<dbReference type="GO" id="GO:0005576">
    <property type="term" value="C:extracellular region"/>
    <property type="evidence" value="ECO:0007669"/>
    <property type="project" value="UniProtKB-SubCell"/>
</dbReference>
<dbReference type="GO" id="GO:0004252">
    <property type="term" value="F:serine-type endopeptidase activity"/>
    <property type="evidence" value="ECO:0007669"/>
    <property type="project" value="UniProtKB-EC"/>
</dbReference>
<dbReference type="GO" id="GO:0006508">
    <property type="term" value="P:proteolysis"/>
    <property type="evidence" value="ECO:0007669"/>
    <property type="project" value="UniProtKB-KW"/>
</dbReference>
<dbReference type="CDD" id="cd00190">
    <property type="entry name" value="Tryp_SPc"/>
    <property type="match status" value="1"/>
</dbReference>
<dbReference type="FunFam" id="2.40.10.10:FF:000047">
    <property type="entry name" value="Trypsin eta"/>
    <property type="match status" value="1"/>
</dbReference>
<dbReference type="Gene3D" id="2.40.10.10">
    <property type="entry name" value="Trypsin-like serine proteases"/>
    <property type="match status" value="1"/>
</dbReference>
<dbReference type="InterPro" id="IPR050430">
    <property type="entry name" value="Peptidase_S1"/>
</dbReference>
<dbReference type="InterPro" id="IPR009003">
    <property type="entry name" value="Peptidase_S1_PA"/>
</dbReference>
<dbReference type="InterPro" id="IPR043504">
    <property type="entry name" value="Peptidase_S1_PA_chymotrypsin"/>
</dbReference>
<dbReference type="InterPro" id="IPR001314">
    <property type="entry name" value="Peptidase_S1A"/>
</dbReference>
<dbReference type="InterPro" id="IPR001254">
    <property type="entry name" value="Trypsin_dom"/>
</dbReference>
<dbReference type="InterPro" id="IPR018114">
    <property type="entry name" value="TRYPSIN_HIS"/>
</dbReference>
<dbReference type="InterPro" id="IPR033116">
    <property type="entry name" value="TRYPSIN_SER"/>
</dbReference>
<dbReference type="PANTHER" id="PTHR24276:SF91">
    <property type="entry name" value="AT26814P-RELATED"/>
    <property type="match status" value="1"/>
</dbReference>
<dbReference type="PANTHER" id="PTHR24276">
    <property type="entry name" value="POLYSERASE-RELATED"/>
    <property type="match status" value="1"/>
</dbReference>
<dbReference type="Pfam" id="PF00089">
    <property type="entry name" value="Trypsin"/>
    <property type="match status" value="1"/>
</dbReference>
<dbReference type="PRINTS" id="PR00722">
    <property type="entry name" value="CHYMOTRYPSIN"/>
</dbReference>
<dbReference type="SMART" id="SM00020">
    <property type="entry name" value="Tryp_SPc"/>
    <property type="match status" value="1"/>
</dbReference>
<dbReference type="SUPFAM" id="SSF50494">
    <property type="entry name" value="Trypsin-like serine proteases"/>
    <property type="match status" value="1"/>
</dbReference>
<dbReference type="PROSITE" id="PS50240">
    <property type="entry name" value="TRYPSIN_DOM"/>
    <property type="match status" value="1"/>
</dbReference>
<dbReference type="PROSITE" id="PS00134">
    <property type="entry name" value="TRYPSIN_HIS"/>
    <property type="match status" value="1"/>
</dbReference>
<dbReference type="PROSITE" id="PS00135">
    <property type="entry name" value="TRYPSIN_SER"/>
    <property type="match status" value="1"/>
</dbReference>
<name>TRYB_MANSE</name>
<accession>P35046</accession>
<sequence>MRLFLALLALGFAAVAAVPANPQRIVGGSTTTIQQYPTIVALLFSRNGNTFFQACGGIILNNRNILTAAHCPHGDAVNRWRVRSGSTFANSGGAVHNLNRVRIHPNYNSRTLDNDIAIMRTSSNIAFNNAAQPARIAGANYNVGDNQVVWAAGWGDIRSGGPPSEQLRHVQVWTVNQATCRSRYASIGRSVTDNMLCSGWLDVGGRDQCQGDSGGPLYHNGVVVGVSSWGEECALARFPGVNARVSRFANWIRNNS</sequence>
<comment type="catalytic activity">
    <reaction>
        <text>Preferential cleavage: Arg-|-Xaa, Lys-|-Xaa.</text>
        <dbReference type="EC" id="3.4.21.4"/>
    </reaction>
</comment>
<comment type="subcellular location">
    <subcellularLocation>
        <location>Secreted</location>
        <location>Extracellular space</location>
    </subcellularLocation>
</comment>
<comment type="tissue specificity">
    <text>Midgut.</text>
</comment>
<comment type="similarity">
    <text evidence="3">Belongs to the peptidase S1 family.</text>
</comment>
<reference key="1">
    <citation type="journal article" date="1994" name="Insect Biochem. Mol. Biol.">
        <title>Sequence of three cDNAs encoding an alkaline midgut trypsin from Manduca sexta.</title>
        <authorList>
            <person name="Peterson A.M."/>
            <person name="Barillas-Mury C.V."/>
            <person name="Wells M.A."/>
        </authorList>
    </citation>
    <scope>NUCLEOTIDE SEQUENCE [MRNA]</scope>
    <source>
        <tissue>Midgut</tissue>
    </source>
</reference>
<organism>
    <name type="scientific">Manduca sexta</name>
    <name type="common">Tobacco hawkmoth</name>
    <name type="synonym">Tobacco hornworm</name>
    <dbReference type="NCBI Taxonomy" id="7130"/>
    <lineage>
        <taxon>Eukaryota</taxon>
        <taxon>Metazoa</taxon>
        <taxon>Ecdysozoa</taxon>
        <taxon>Arthropoda</taxon>
        <taxon>Hexapoda</taxon>
        <taxon>Insecta</taxon>
        <taxon>Pterygota</taxon>
        <taxon>Neoptera</taxon>
        <taxon>Endopterygota</taxon>
        <taxon>Lepidoptera</taxon>
        <taxon>Glossata</taxon>
        <taxon>Ditrysia</taxon>
        <taxon>Bombycoidea</taxon>
        <taxon>Sphingidae</taxon>
        <taxon>Sphinginae</taxon>
        <taxon>Sphingini</taxon>
        <taxon>Manduca</taxon>
    </lineage>
</organism>
<evidence type="ECO:0000250" key="1"/>
<evidence type="ECO:0000255" key="2"/>
<evidence type="ECO:0000255" key="3">
    <source>
        <dbReference type="PROSITE-ProRule" id="PRU00274"/>
    </source>
</evidence>
<proteinExistence type="evidence at transcript level"/>
<keyword id="KW-1015">Disulfide bond</keyword>
<keyword id="KW-0378">Hydrolase</keyword>
<keyword id="KW-0645">Protease</keyword>
<keyword id="KW-0964">Secreted</keyword>
<keyword id="KW-0720">Serine protease</keyword>
<keyword id="KW-0732">Signal</keyword>
<keyword id="KW-0865">Zymogen</keyword>